<proteinExistence type="inferred from homology"/>
<organism>
    <name type="scientific">Bacillus subtilis (strain 168)</name>
    <dbReference type="NCBI Taxonomy" id="224308"/>
    <lineage>
        <taxon>Bacteria</taxon>
        <taxon>Bacillati</taxon>
        <taxon>Bacillota</taxon>
        <taxon>Bacilli</taxon>
        <taxon>Bacillales</taxon>
        <taxon>Bacillaceae</taxon>
        <taxon>Bacillus</taxon>
    </lineage>
</organism>
<feature type="chain" id="PRO_0000361095" description="Putative enoyl-CoA hydratase/isomerase YngF">
    <location>
        <begin position="1"/>
        <end position="260"/>
    </location>
</feature>
<comment type="similarity">
    <text evidence="1">Belongs to the enoyl-CoA hydratase/isomerase family.</text>
</comment>
<protein>
    <recommendedName>
        <fullName>Putative enoyl-CoA hydratase/isomerase YngF</fullName>
    </recommendedName>
</protein>
<keyword id="KW-0456">Lyase</keyword>
<keyword id="KW-1185">Reference proteome</keyword>
<sequence>MGDSILFTVKNEHMALITLNRPQAANALSAEMLRNLQMIIQEIEFNSNIRCVILTGTGEKAFCAGADLKERIKLKEDQVLESVSLIQRTAALLDALPQPVIAAINGSALGGGLELALACDLRIATEAAVLGLPETGLAIIPGAGGTQRLPRLIGRGKAKEFIYTGRRVTAHEAKEIGLVEHVTAPCDLMPKAEELAAAISANGPIAVRQAKFAINKGLETDLATGLAIEQKAYEQTIPTKDRREGLQAFQEKRRAVYKGI</sequence>
<reference key="1">
    <citation type="journal article" date="1997" name="Microbiology">
        <title>Sequence completion, identification and definition of the fengycin operon in Bacillus subtilis 168.</title>
        <authorList>
            <person name="Tosato V."/>
            <person name="Albertini A.M."/>
            <person name="Zotti M."/>
            <person name="Sonda S."/>
            <person name="Bruschi C.V."/>
        </authorList>
    </citation>
    <scope>NUCLEOTIDE SEQUENCE [GENOMIC DNA]</scope>
    <source>
        <strain>168</strain>
    </source>
</reference>
<reference key="2">
    <citation type="journal article" date="1997" name="Nature">
        <title>The complete genome sequence of the Gram-positive bacterium Bacillus subtilis.</title>
        <authorList>
            <person name="Kunst F."/>
            <person name="Ogasawara N."/>
            <person name="Moszer I."/>
            <person name="Albertini A.M."/>
            <person name="Alloni G."/>
            <person name="Azevedo V."/>
            <person name="Bertero M.G."/>
            <person name="Bessieres P."/>
            <person name="Bolotin A."/>
            <person name="Borchert S."/>
            <person name="Borriss R."/>
            <person name="Boursier L."/>
            <person name="Brans A."/>
            <person name="Braun M."/>
            <person name="Brignell S.C."/>
            <person name="Bron S."/>
            <person name="Brouillet S."/>
            <person name="Bruschi C.V."/>
            <person name="Caldwell B."/>
            <person name="Capuano V."/>
            <person name="Carter N.M."/>
            <person name="Choi S.-K."/>
            <person name="Codani J.-J."/>
            <person name="Connerton I.F."/>
            <person name="Cummings N.J."/>
            <person name="Daniel R.A."/>
            <person name="Denizot F."/>
            <person name="Devine K.M."/>
            <person name="Duesterhoeft A."/>
            <person name="Ehrlich S.D."/>
            <person name="Emmerson P.T."/>
            <person name="Entian K.-D."/>
            <person name="Errington J."/>
            <person name="Fabret C."/>
            <person name="Ferrari E."/>
            <person name="Foulger D."/>
            <person name="Fritz C."/>
            <person name="Fujita M."/>
            <person name="Fujita Y."/>
            <person name="Fuma S."/>
            <person name="Galizzi A."/>
            <person name="Galleron N."/>
            <person name="Ghim S.-Y."/>
            <person name="Glaser P."/>
            <person name="Goffeau A."/>
            <person name="Golightly E.J."/>
            <person name="Grandi G."/>
            <person name="Guiseppi G."/>
            <person name="Guy B.J."/>
            <person name="Haga K."/>
            <person name="Haiech J."/>
            <person name="Harwood C.R."/>
            <person name="Henaut A."/>
            <person name="Hilbert H."/>
            <person name="Holsappel S."/>
            <person name="Hosono S."/>
            <person name="Hullo M.-F."/>
            <person name="Itaya M."/>
            <person name="Jones L.-M."/>
            <person name="Joris B."/>
            <person name="Karamata D."/>
            <person name="Kasahara Y."/>
            <person name="Klaerr-Blanchard M."/>
            <person name="Klein C."/>
            <person name="Kobayashi Y."/>
            <person name="Koetter P."/>
            <person name="Koningstein G."/>
            <person name="Krogh S."/>
            <person name="Kumano M."/>
            <person name="Kurita K."/>
            <person name="Lapidus A."/>
            <person name="Lardinois S."/>
            <person name="Lauber J."/>
            <person name="Lazarevic V."/>
            <person name="Lee S.-M."/>
            <person name="Levine A."/>
            <person name="Liu H."/>
            <person name="Masuda S."/>
            <person name="Mauel C."/>
            <person name="Medigue C."/>
            <person name="Medina N."/>
            <person name="Mellado R.P."/>
            <person name="Mizuno M."/>
            <person name="Moestl D."/>
            <person name="Nakai S."/>
            <person name="Noback M."/>
            <person name="Noone D."/>
            <person name="O'Reilly M."/>
            <person name="Ogawa K."/>
            <person name="Ogiwara A."/>
            <person name="Oudega B."/>
            <person name="Park S.-H."/>
            <person name="Parro V."/>
            <person name="Pohl T.M."/>
            <person name="Portetelle D."/>
            <person name="Porwollik S."/>
            <person name="Prescott A.M."/>
            <person name="Presecan E."/>
            <person name="Pujic P."/>
            <person name="Purnelle B."/>
            <person name="Rapoport G."/>
            <person name="Rey M."/>
            <person name="Reynolds S."/>
            <person name="Rieger M."/>
            <person name="Rivolta C."/>
            <person name="Rocha E."/>
            <person name="Roche B."/>
            <person name="Rose M."/>
            <person name="Sadaie Y."/>
            <person name="Sato T."/>
            <person name="Scanlan E."/>
            <person name="Schleich S."/>
            <person name="Schroeter R."/>
            <person name="Scoffone F."/>
            <person name="Sekiguchi J."/>
            <person name="Sekowska A."/>
            <person name="Seror S.J."/>
            <person name="Serror P."/>
            <person name="Shin B.-S."/>
            <person name="Soldo B."/>
            <person name="Sorokin A."/>
            <person name="Tacconi E."/>
            <person name="Takagi T."/>
            <person name="Takahashi H."/>
            <person name="Takemaru K."/>
            <person name="Takeuchi M."/>
            <person name="Tamakoshi A."/>
            <person name="Tanaka T."/>
            <person name="Terpstra P."/>
            <person name="Tognoni A."/>
            <person name="Tosato V."/>
            <person name="Uchiyama S."/>
            <person name="Vandenbol M."/>
            <person name="Vannier F."/>
            <person name="Vassarotti A."/>
            <person name="Viari A."/>
            <person name="Wambutt R."/>
            <person name="Wedler E."/>
            <person name="Wedler H."/>
            <person name="Weitzenegger T."/>
            <person name="Winters P."/>
            <person name="Wipat A."/>
            <person name="Yamamoto H."/>
            <person name="Yamane K."/>
            <person name="Yasumoto K."/>
            <person name="Yata K."/>
            <person name="Yoshida K."/>
            <person name="Yoshikawa H.-F."/>
            <person name="Zumstein E."/>
            <person name="Yoshikawa H."/>
            <person name="Danchin A."/>
        </authorList>
    </citation>
    <scope>NUCLEOTIDE SEQUENCE [LARGE SCALE GENOMIC DNA]</scope>
    <source>
        <strain>168</strain>
    </source>
</reference>
<dbReference type="EMBL" id="Y13917">
    <property type="protein sequence ID" value="CAA74218.1"/>
    <property type="molecule type" value="Genomic_DNA"/>
</dbReference>
<dbReference type="EMBL" id="AL009126">
    <property type="protein sequence ID" value="CAB13705.1"/>
    <property type="molecule type" value="Genomic_DNA"/>
</dbReference>
<dbReference type="PIR" id="C69893">
    <property type="entry name" value="C69893"/>
</dbReference>
<dbReference type="RefSeq" id="WP_003231526.1">
    <property type="nucleotide sequence ID" value="NZ_OZ025638.1"/>
</dbReference>
<dbReference type="SMR" id="O34893"/>
<dbReference type="FunCoup" id="O34893">
    <property type="interactions" value="563"/>
</dbReference>
<dbReference type="STRING" id="224308.BSU18220"/>
<dbReference type="PaxDb" id="224308-BSU18220"/>
<dbReference type="EnsemblBacteria" id="CAB13705">
    <property type="protein sequence ID" value="CAB13705"/>
    <property type="gene ID" value="BSU_18220"/>
</dbReference>
<dbReference type="GeneID" id="939467"/>
<dbReference type="KEGG" id="bsu:BSU18220"/>
<dbReference type="PATRIC" id="fig|224308.179.peg.1987"/>
<dbReference type="eggNOG" id="COG1024">
    <property type="taxonomic scope" value="Bacteria"/>
</dbReference>
<dbReference type="InParanoid" id="O34893"/>
<dbReference type="OrthoDB" id="9775794at2"/>
<dbReference type="PhylomeDB" id="O34893"/>
<dbReference type="BioCyc" id="BSUB:BSU18220-MONOMER"/>
<dbReference type="Proteomes" id="UP000001570">
    <property type="component" value="Chromosome"/>
</dbReference>
<dbReference type="GO" id="GO:0016829">
    <property type="term" value="F:lyase activity"/>
    <property type="evidence" value="ECO:0007669"/>
    <property type="project" value="UniProtKB-KW"/>
</dbReference>
<dbReference type="GO" id="GO:0006635">
    <property type="term" value="P:fatty acid beta-oxidation"/>
    <property type="evidence" value="ECO:0000318"/>
    <property type="project" value="GO_Central"/>
</dbReference>
<dbReference type="CDD" id="cd06558">
    <property type="entry name" value="crotonase-like"/>
    <property type="match status" value="1"/>
</dbReference>
<dbReference type="FunFam" id="3.90.226.10:FF:000009">
    <property type="entry name" value="Carnitinyl-CoA dehydratase"/>
    <property type="match status" value="1"/>
</dbReference>
<dbReference type="FunFam" id="1.10.12.10:FF:000001">
    <property type="entry name" value="Probable enoyl-CoA hydratase, mitochondrial"/>
    <property type="match status" value="1"/>
</dbReference>
<dbReference type="Gene3D" id="3.90.226.10">
    <property type="entry name" value="2-enoyl-CoA Hydratase, Chain A, domain 1"/>
    <property type="match status" value="1"/>
</dbReference>
<dbReference type="Gene3D" id="1.10.12.10">
    <property type="entry name" value="Lyase 2-enoyl-coa Hydratase, Chain A, domain 2"/>
    <property type="match status" value="1"/>
</dbReference>
<dbReference type="InterPro" id="IPR029045">
    <property type="entry name" value="ClpP/crotonase-like_dom_sf"/>
</dbReference>
<dbReference type="InterPro" id="IPR018376">
    <property type="entry name" value="Enoyl-CoA_hyd/isom_CS"/>
</dbReference>
<dbReference type="InterPro" id="IPR001753">
    <property type="entry name" value="Enoyl-CoA_hydra/iso"/>
</dbReference>
<dbReference type="InterPro" id="IPR014748">
    <property type="entry name" value="Enoyl-CoA_hydra_C"/>
</dbReference>
<dbReference type="NCBIfam" id="NF005802">
    <property type="entry name" value="PRK07657.1"/>
    <property type="match status" value="1"/>
</dbReference>
<dbReference type="PANTHER" id="PTHR11941:SF54">
    <property type="entry name" value="ENOYL-COA HYDRATASE, MITOCHONDRIAL"/>
    <property type="match status" value="1"/>
</dbReference>
<dbReference type="PANTHER" id="PTHR11941">
    <property type="entry name" value="ENOYL-COA HYDRATASE-RELATED"/>
    <property type="match status" value="1"/>
</dbReference>
<dbReference type="Pfam" id="PF00378">
    <property type="entry name" value="ECH_1"/>
    <property type="match status" value="1"/>
</dbReference>
<dbReference type="SUPFAM" id="SSF52096">
    <property type="entry name" value="ClpP/crotonase"/>
    <property type="match status" value="1"/>
</dbReference>
<dbReference type="PROSITE" id="PS00166">
    <property type="entry name" value="ENOYL_COA_HYDRATASE"/>
    <property type="match status" value="1"/>
</dbReference>
<accession>O34893</accession>
<accession>Q799L6</accession>
<evidence type="ECO:0000305" key="1"/>
<gene>
    <name type="primary">yngF</name>
    <name type="ordered locus">BSU18220</name>
</gene>
<name>YNGF_BACSU</name>